<reference key="1">
    <citation type="journal article" date="1998" name="NeuroReport">
        <title>Cloning and expression pattern of a murine semaphorin homologous to H-sema IV.</title>
        <authorList>
            <person name="Eckhardt F."/>
            <person name="Meyerhans A."/>
        </authorList>
    </citation>
    <scope>NUCLEOTIDE SEQUENCE [MRNA] (ISOFORMS A AND B)</scope>
</reference>
<reference key="2">
    <citation type="journal article" date="2009" name="PLoS Biol.">
        <title>Lineage-specific biology revealed by a finished genome assembly of the mouse.</title>
        <authorList>
            <person name="Church D.M."/>
            <person name="Goodstadt L."/>
            <person name="Hillier L.W."/>
            <person name="Zody M.C."/>
            <person name="Goldstein S."/>
            <person name="She X."/>
            <person name="Bult C.J."/>
            <person name="Agarwala R."/>
            <person name="Cherry J.L."/>
            <person name="DiCuccio M."/>
            <person name="Hlavina W."/>
            <person name="Kapustin Y."/>
            <person name="Meric P."/>
            <person name="Maglott D."/>
            <person name="Birtle Z."/>
            <person name="Marques A.C."/>
            <person name="Graves T."/>
            <person name="Zhou S."/>
            <person name="Teague B."/>
            <person name="Potamousis K."/>
            <person name="Churas C."/>
            <person name="Place M."/>
            <person name="Herschleb J."/>
            <person name="Runnheim R."/>
            <person name="Forrest D."/>
            <person name="Amos-Landgraf J."/>
            <person name="Schwartz D.C."/>
            <person name="Cheng Z."/>
            <person name="Lindblad-Toh K."/>
            <person name="Eichler E.E."/>
            <person name="Ponting C.P."/>
        </authorList>
    </citation>
    <scope>NUCLEOTIDE SEQUENCE [LARGE SCALE GENOMIC DNA]</scope>
    <source>
        <strain>C57BL/6J</strain>
    </source>
</reference>
<reference key="3">
    <citation type="journal article" date="2004" name="Genome Res.">
        <title>The status, quality, and expansion of the NIH full-length cDNA project: the Mammalian Gene Collection (MGC).</title>
        <authorList>
            <consortium name="The MGC Project Team"/>
        </authorList>
    </citation>
    <scope>NUCLEOTIDE SEQUENCE [LARGE SCALE MRNA] (ISOFORM A)</scope>
    <source>
        <strain>FVB/N</strain>
        <tissue>Colon</tissue>
    </source>
</reference>
<sequence length="785" mass="88549">MLVTAFILWASLLTGAWPATPIQDQLPATPRVRLSFKELKATGTAHFFNFLLNTTDYRILLKDEDHDRMYVGSKDYVLSLDLHDINREPLIIHWAASPQRIEECILSGKDGNGECGNFVRLIQPWNRTHLYVCGTGAYNPMCTYVNRGRRAQALPWTQMQVVRGRGSRATDGADRPTPTAPRQDYIFYLEPEKLESGKGKCPYDPKLDTASALINEELYAGVYIDFMGTDAAIFRTLGKQTAMRTDQYNSRWLNDPSFIHAELIPDSAERNDDKLYFFFRERSAEAPQNPAVYARIGRICLNDDGGHCCLVNKWSTFLKARLVCSVPGEDGIETHFDELQDVFVQQTQDVRNPVIYAVFTSSGSVFRGSAVCVYSMADIRMVFNGPFAHKEGPNYQWMPFSGKMPYPRPGTCPGGTFTPSMKSTKDYPDEVINFMRTHPLMYQAVYPLQRRPLVVRTGAPYRLTTVAVDQVDAADGRYEVLFLGTDRGTVQKVIVLPKDDQEVEELMLEEVEVFKEPAPVKTMTISSKRQQLYVASAVGVTHLSLHRCQAYGAACADCCLARDPYCAWDGQACSRYTASSKRRSRRQDVRHGNPIRQCRGFNSNANKNAVESVQYGVAGSAAFLECQPRSPQATVKWLFQRDPSDRRREIRAEDRFLRTEQGLLLRALQLGDRGLYSCTATENNFKHIVTRVQLHVLGRDAVHAALFPPLAVSVPPPPGTGPPTPPYQELAQLLAQPEVGLIHQYCQGYWRHVPPRPREAPGALRPPELQDQKKPRNRRHHPPDT</sequence>
<keyword id="KW-0025">Alternative splicing</keyword>
<keyword id="KW-1015">Disulfide bond</keyword>
<keyword id="KW-0325">Glycoprotein</keyword>
<keyword id="KW-0393">Immunoglobulin domain</keyword>
<keyword id="KW-1185">Reference proteome</keyword>
<keyword id="KW-0964">Secreted</keyword>
<keyword id="KW-0732">Signal</keyword>
<protein>
    <recommendedName>
        <fullName>Semaphorin-3F</fullName>
    </recommendedName>
    <alternativeName>
        <fullName>Semaphorin IV</fullName>
        <shortName>Sema IV</shortName>
    </alternativeName>
</protein>
<name>SEM3F_MOUSE</name>
<comment type="subcellular location">
    <subcellularLocation>
        <location evidence="1">Secreted</location>
    </subcellularLocation>
</comment>
<comment type="alternative products">
    <event type="alternative splicing"/>
    <isoform>
        <id>O88632-1</id>
        <name>B</name>
        <sequence type="displayed"/>
    </isoform>
    <isoform>
        <id>O88632-2</id>
        <name>A</name>
        <sequence type="described" ref="VSP_006042"/>
    </isoform>
</comment>
<comment type="tissue specificity">
    <text>Expressed ubiquitously in adulthood. During embryogenesis, expressed in subregions of the central nervous system and various other tissues like skin, kidney, lung and intestine.</text>
</comment>
<comment type="similarity">
    <text evidence="7">Belongs to the semaphorin family.</text>
</comment>
<proteinExistence type="evidence at transcript level"/>
<accession>O88632</accession>
<accession>E9QNC5</accession>
<accession>O88633</accession>
<gene>
    <name type="primary">Sema3f</name>
</gene>
<dbReference type="EMBL" id="AF080090">
    <property type="protein sequence ID" value="AAC28108.1"/>
    <property type="molecule type" value="mRNA"/>
</dbReference>
<dbReference type="EMBL" id="AF080091">
    <property type="protein sequence ID" value="AAC28109.1"/>
    <property type="molecule type" value="mRNA"/>
</dbReference>
<dbReference type="EMBL" id="AC152718">
    <property type="status" value="NOT_ANNOTATED_CDS"/>
    <property type="molecule type" value="Genomic_DNA"/>
</dbReference>
<dbReference type="EMBL" id="AC162905">
    <property type="status" value="NOT_ANNOTATED_CDS"/>
    <property type="molecule type" value="Genomic_DNA"/>
</dbReference>
<dbReference type="EMBL" id="BC010976">
    <property type="protein sequence ID" value="AAH10976.1"/>
    <property type="molecule type" value="mRNA"/>
</dbReference>
<dbReference type="CCDS" id="CCDS23505.1">
    <molecule id="O88632-2"/>
</dbReference>
<dbReference type="CCDS" id="CCDS81069.1">
    <molecule id="O88632-1"/>
</dbReference>
<dbReference type="RefSeq" id="NP_001298080.1">
    <molecule id="O88632-1"/>
    <property type="nucleotide sequence ID" value="NM_001311151.3"/>
</dbReference>
<dbReference type="RefSeq" id="NP_001366425.1">
    <molecule id="O88632-2"/>
    <property type="nucleotide sequence ID" value="NM_001379496.2"/>
</dbReference>
<dbReference type="RefSeq" id="NP_001391954.1">
    <molecule id="O88632-1"/>
    <property type="nucleotide sequence ID" value="NM_001405025.2"/>
</dbReference>
<dbReference type="RefSeq" id="NP_035479.2">
    <molecule id="O88632-2"/>
    <property type="nucleotide sequence ID" value="NM_011349.3"/>
</dbReference>
<dbReference type="RefSeq" id="XP_006511739.1">
    <property type="nucleotide sequence ID" value="XM_006511676.3"/>
</dbReference>
<dbReference type="RefSeq" id="XP_017168717.1">
    <property type="nucleotide sequence ID" value="XM_017313228.1"/>
</dbReference>
<dbReference type="SMR" id="O88632"/>
<dbReference type="BioGRID" id="203165">
    <property type="interactions" value="4"/>
</dbReference>
<dbReference type="FunCoup" id="O88632">
    <property type="interactions" value="94"/>
</dbReference>
<dbReference type="STRING" id="10090.ENSMUSP00000141865"/>
<dbReference type="GlyCosmos" id="O88632">
    <property type="glycosylation" value="2 sites, No reported glycans"/>
</dbReference>
<dbReference type="GlyGen" id="O88632">
    <property type="glycosylation" value="4 sites, 1 N-linked glycan (1 site)"/>
</dbReference>
<dbReference type="PhosphoSitePlus" id="O88632"/>
<dbReference type="PaxDb" id="10090-ENSMUSP00000079400"/>
<dbReference type="ProteomicsDB" id="256613">
    <molecule id="O88632-1"/>
</dbReference>
<dbReference type="ProteomicsDB" id="256614">
    <molecule id="O88632-2"/>
</dbReference>
<dbReference type="Pumba" id="O88632"/>
<dbReference type="Antibodypedia" id="30785">
    <property type="antibodies" value="181 antibodies from 29 providers"/>
</dbReference>
<dbReference type="DNASU" id="20350"/>
<dbReference type="Ensembl" id="ENSMUST00000080560.9">
    <molecule id="O88632-2"/>
    <property type="protein sequence ID" value="ENSMUSP00000079400.4"/>
    <property type="gene ID" value="ENSMUSG00000034684.13"/>
</dbReference>
<dbReference type="Ensembl" id="ENSMUST00000192727.6">
    <molecule id="O88632-1"/>
    <property type="protein sequence ID" value="ENSMUSP00000141865.2"/>
    <property type="gene ID" value="ENSMUSG00000034684.13"/>
</dbReference>
<dbReference type="GeneID" id="20350"/>
<dbReference type="KEGG" id="mmu:20350"/>
<dbReference type="UCSC" id="uc009rms.1">
    <molecule id="O88632-1"/>
    <property type="organism name" value="mouse"/>
</dbReference>
<dbReference type="UCSC" id="uc009rmt.1">
    <molecule id="O88632-2"/>
    <property type="organism name" value="mouse"/>
</dbReference>
<dbReference type="AGR" id="MGI:1096347"/>
<dbReference type="CTD" id="6405"/>
<dbReference type="MGI" id="MGI:1096347">
    <property type="gene designation" value="Sema3f"/>
</dbReference>
<dbReference type="VEuPathDB" id="HostDB:ENSMUSG00000034684"/>
<dbReference type="eggNOG" id="KOG3611">
    <property type="taxonomic scope" value="Eukaryota"/>
</dbReference>
<dbReference type="GeneTree" id="ENSGT00940000156703"/>
<dbReference type="HOGENOM" id="CLU_009051_5_0_1"/>
<dbReference type="InParanoid" id="O88632"/>
<dbReference type="OMA" id="HQDYIFY"/>
<dbReference type="OrthoDB" id="9988752at2759"/>
<dbReference type="TreeFam" id="TF352628"/>
<dbReference type="BioGRID-ORCS" id="20350">
    <property type="hits" value="5 hits in 80 CRISPR screens"/>
</dbReference>
<dbReference type="PRO" id="PR:O88632"/>
<dbReference type="Proteomes" id="UP000000589">
    <property type="component" value="Chromosome 9"/>
</dbReference>
<dbReference type="RNAct" id="O88632">
    <property type="molecule type" value="protein"/>
</dbReference>
<dbReference type="Bgee" id="ENSMUSG00000034684">
    <property type="expression patterns" value="Expressed in ectoplacental cone and 177 other cell types or tissues"/>
</dbReference>
<dbReference type="ExpressionAtlas" id="O88632">
    <property type="expression patterns" value="baseline and differential"/>
</dbReference>
<dbReference type="GO" id="GO:0005615">
    <property type="term" value="C:extracellular space"/>
    <property type="evidence" value="ECO:0007005"/>
    <property type="project" value="BHF-UCL"/>
</dbReference>
<dbReference type="GO" id="GO:0098978">
    <property type="term" value="C:glutamatergic synapse"/>
    <property type="evidence" value="ECO:0000314"/>
    <property type="project" value="SynGO"/>
</dbReference>
<dbReference type="GO" id="GO:0045499">
    <property type="term" value="F:chemorepellent activity"/>
    <property type="evidence" value="ECO:0000314"/>
    <property type="project" value="MGI"/>
</dbReference>
<dbReference type="GO" id="GO:0030215">
    <property type="term" value="F:semaphorin receptor binding"/>
    <property type="evidence" value="ECO:0007669"/>
    <property type="project" value="InterPro"/>
</dbReference>
<dbReference type="GO" id="GO:0048846">
    <property type="term" value="P:axon extension involved in axon guidance"/>
    <property type="evidence" value="ECO:0000314"/>
    <property type="project" value="MGI"/>
</dbReference>
<dbReference type="GO" id="GO:0007411">
    <property type="term" value="P:axon guidance"/>
    <property type="evidence" value="ECO:0000314"/>
    <property type="project" value="MGI"/>
</dbReference>
<dbReference type="GO" id="GO:0021785">
    <property type="term" value="P:branchiomotor neuron axon guidance"/>
    <property type="evidence" value="ECO:0000315"/>
    <property type="project" value="ParkinsonsUK-UCL"/>
</dbReference>
<dbReference type="GO" id="GO:0021612">
    <property type="term" value="P:facial nerve structural organization"/>
    <property type="evidence" value="ECO:0000315"/>
    <property type="project" value="ParkinsonsUK-UCL"/>
</dbReference>
<dbReference type="GO" id="GO:0050919">
    <property type="term" value="P:negative chemotaxis"/>
    <property type="evidence" value="ECO:0000314"/>
    <property type="project" value="MGI"/>
</dbReference>
<dbReference type="GO" id="GO:0048843">
    <property type="term" value="P:negative regulation of axon extension involved in axon guidance"/>
    <property type="evidence" value="ECO:0000314"/>
    <property type="project" value="MGI"/>
</dbReference>
<dbReference type="GO" id="GO:0021675">
    <property type="term" value="P:nerve development"/>
    <property type="evidence" value="ECO:0000315"/>
    <property type="project" value="BHF-UCL"/>
</dbReference>
<dbReference type="GO" id="GO:1901166">
    <property type="term" value="P:neural crest cell migration involved in autonomic nervous system development"/>
    <property type="evidence" value="ECO:0000315"/>
    <property type="project" value="ParkinsonsUK-UCL"/>
</dbReference>
<dbReference type="GO" id="GO:0099175">
    <property type="term" value="P:regulation of postsynapse organization"/>
    <property type="evidence" value="ECO:0000314"/>
    <property type="project" value="SynGO"/>
</dbReference>
<dbReference type="GO" id="GO:0071526">
    <property type="term" value="P:semaphorin-plexin signaling pathway"/>
    <property type="evidence" value="ECO:0000315"/>
    <property type="project" value="ParkinsonsUK-UCL"/>
</dbReference>
<dbReference type="GO" id="GO:0061549">
    <property type="term" value="P:sympathetic ganglion development"/>
    <property type="evidence" value="ECO:0000315"/>
    <property type="project" value="BHF-UCL"/>
</dbReference>
<dbReference type="GO" id="GO:0097490">
    <property type="term" value="P:sympathetic neuron projection extension"/>
    <property type="evidence" value="ECO:0000315"/>
    <property type="project" value="BHF-UCL"/>
</dbReference>
<dbReference type="GO" id="GO:0097491">
    <property type="term" value="P:sympathetic neuron projection guidance"/>
    <property type="evidence" value="ECO:0000315"/>
    <property type="project" value="BHF-UCL"/>
</dbReference>
<dbReference type="GO" id="GO:0021637">
    <property type="term" value="P:trigeminal nerve structural organization"/>
    <property type="evidence" value="ECO:0000315"/>
    <property type="project" value="ParkinsonsUK-UCL"/>
</dbReference>
<dbReference type="GO" id="GO:0036484">
    <property type="term" value="P:trunk neural crest cell migration"/>
    <property type="evidence" value="ECO:0000315"/>
    <property type="project" value="MGI"/>
</dbReference>
<dbReference type="GO" id="GO:0036486">
    <property type="term" value="P:ventral trunk neural crest cell migration"/>
    <property type="evidence" value="ECO:0000315"/>
    <property type="project" value="ParkinsonsUK-UCL"/>
</dbReference>
<dbReference type="CDD" id="cd05871">
    <property type="entry name" value="Ig_Sema3"/>
    <property type="match status" value="1"/>
</dbReference>
<dbReference type="CDD" id="cd11254">
    <property type="entry name" value="Sema_3F"/>
    <property type="match status" value="1"/>
</dbReference>
<dbReference type="FunFam" id="2.60.40.10:FF:000030">
    <property type="entry name" value="Semaphorin 3F like"/>
    <property type="match status" value="1"/>
</dbReference>
<dbReference type="FunFam" id="3.30.1680.10:FF:000001">
    <property type="entry name" value="Semaphorin 3F like"/>
    <property type="match status" value="1"/>
</dbReference>
<dbReference type="Gene3D" id="2.60.40.10">
    <property type="entry name" value="Immunoglobulins"/>
    <property type="match status" value="1"/>
</dbReference>
<dbReference type="Gene3D" id="3.30.1680.10">
    <property type="entry name" value="ligand-binding face of the semaphorins, domain 2"/>
    <property type="match status" value="1"/>
</dbReference>
<dbReference type="Gene3D" id="2.130.10.10">
    <property type="entry name" value="YVTN repeat-like/Quinoprotein amine dehydrogenase"/>
    <property type="match status" value="1"/>
</dbReference>
<dbReference type="InterPro" id="IPR007110">
    <property type="entry name" value="Ig-like_dom"/>
</dbReference>
<dbReference type="InterPro" id="IPR036179">
    <property type="entry name" value="Ig-like_dom_sf"/>
</dbReference>
<dbReference type="InterPro" id="IPR013783">
    <property type="entry name" value="Ig-like_fold"/>
</dbReference>
<dbReference type="InterPro" id="IPR003599">
    <property type="entry name" value="Ig_sub"/>
</dbReference>
<dbReference type="InterPro" id="IPR003598">
    <property type="entry name" value="Ig_sub2"/>
</dbReference>
<dbReference type="InterPro" id="IPR016201">
    <property type="entry name" value="PSI"/>
</dbReference>
<dbReference type="InterPro" id="IPR001627">
    <property type="entry name" value="Semap_dom"/>
</dbReference>
<dbReference type="InterPro" id="IPR036352">
    <property type="entry name" value="Semap_dom_sf"/>
</dbReference>
<dbReference type="InterPro" id="IPR027231">
    <property type="entry name" value="Semaphorin"/>
</dbReference>
<dbReference type="InterPro" id="IPR015943">
    <property type="entry name" value="WD40/YVTN_repeat-like_dom_sf"/>
</dbReference>
<dbReference type="PANTHER" id="PTHR11036">
    <property type="entry name" value="SEMAPHORIN"/>
    <property type="match status" value="1"/>
</dbReference>
<dbReference type="PANTHER" id="PTHR11036:SF27">
    <property type="entry name" value="SEMAPHORIN-3F"/>
    <property type="match status" value="1"/>
</dbReference>
<dbReference type="Pfam" id="PF01403">
    <property type="entry name" value="Sema"/>
    <property type="match status" value="1"/>
</dbReference>
<dbReference type="SMART" id="SM00409">
    <property type="entry name" value="IG"/>
    <property type="match status" value="1"/>
</dbReference>
<dbReference type="SMART" id="SM00408">
    <property type="entry name" value="IGc2"/>
    <property type="match status" value="1"/>
</dbReference>
<dbReference type="SMART" id="SM00423">
    <property type="entry name" value="PSI"/>
    <property type="match status" value="1"/>
</dbReference>
<dbReference type="SMART" id="SM00630">
    <property type="entry name" value="Sema"/>
    <property type="match status" value="1"/>
</dbReference>
<dbReference type="SUPFAM" id="SSF48726">
    <property type="entry name" value="Immunoglobulin"/>
    <property type="match status" value="1"/>
</dbReference>
<dbReference type="SUPFAM" id="SSF103575">
    <property type="entry name" value="Plexin repeat"/>
    <property type="match status" value="1"/>
</dbReference>
<dbReference type="SUPFAM" id="SSF101912">
    <property type="entry name" value="Sema domain"/>
    <property type="match status" value="1"/>
</dbReference>
<dbReference type="PROSITE" id="PS50835">
    <property type="entry name" value="IG_LIKE"/>
    <property type="match status" value="1"/>
</dbReference>
<dbReference type="PROSITE" id="PS51004">
    <property type="entry name" value="SEMA"/>
    <property type="match status" value="1"/>
</dbReference>
<feature type="signal peptide" evidence="2">
    <location>
        <begin position="1"/>
        <end position="18"/>
    </location>
</feature>
<feature type="chain" id="PRO_0000032321" description="Semaphorin-3F">
    <location>
        <begin position="19"/>
        <end position="785"/>
    </location>
</feature>
<feature type="domain" description="Sema" evidence="3">
    <location>
        <begin position="31"/>
        <end position="545"/>
    </location>
</feature>
<feature type="domain" description="Ig-like C2-type">
    <location>
        <begin position="605"/>
        <end position="695"/>
    </location>
</feature>
<feature type="region of interest" description="Disordered" evidence="4">
    <location>
        <begin position="583"/>
        <end position="602"/>
    </location>
</feature>
<feature type="region of interest" description="Disordered" evidence="4">
    <location>
        <begin position="753"/>
        <end position="785"/>
    </location>
</feature>
<feature type="compositionally biased region" description="Basic residues" evidence="4">
    <location>
        <begin position="775"/>
        <end position="785"/>
    </location>
</feature>
<feature type="glycosylation site" description="N-linked (GlcNAc...) asparagine" evidence="2">
    <location>
        <position position="53"/>
    </location>
</feature>
<feature type="glycosylation site" description="N-linked (GlcNAc...) asparagine" evidence="2">
    <location>
        <position position="126"/>
    </location>
</feature>
<feature type="disulfide bond" evidence="1">
    <location>
        <begin position="104"/>
        <end position="115"/>
    </location>
</feature>
<feature type="disulfide bond" evidence="1">
    <location>
        <begin position="133"/>
        <end position="142"/>
    </location>
</feature>
<feature type="disulfide bond" evidence="1">
    <location>
        <begin position="300"/>
        <end position="412"/>
    </location>
</feature>
<feature type="disulfide bond" evidence="1">
    <location>
        <begin position="324"/>
        <end position="372"/>
    </location>
</feature>
<feature type="disulfide bond" evidence="1">
    <location>
        <begin position="548"/>
        <end position="566"/>
    </location>
</feature>
<feature type="disulfide bond" evidence="1">
    <location>
        <begin position="678"/>
        <end position="746"/>
    </location>
</feature>
<feature type="splice variant" id="VSP_006042" description="In isoform A." evidence="5 6">
    <location>
        <begin position="153"/>
        <end position="183"/>
    </location>
</feature>
<feature type="sequence conflict" description="In Ref. 1; AAC28108/AAC28109 and 3; AAH10976." evidence="7" ref="1 3">
    <original>V</original>
    <variation>I</variation>
    <location>
        <position position="350"/>
    </location>
</feature>
<feature type="sequence conflict" description="In Ref. 1; AAC28108/AAC28109 and 3; AAH10976." evidence="7" ref="1 3">
    <original>R</original>
    <variation>S</variation>
    <location>
        <position position="756"/>
    </location>
</feature>
<evidence type="ECO:0000250" key="1"/>
<evidence type="ECO:0000255" key="2"/>
<evidence type="ECO:0000255" key="3">
    <source>
        <dbReference type="PROSITE-ProRule" id="PRU00352"/>
    </source>
</evidence>
<evidence type="ECO:0000256" key="4">
    <source>
        <dbReference type="SAM" id="MobiDB-lite"/>
    </source>
</evidence>
<evidence type="ECO:0000303" key="5">
    <source>
    </source>
</evidence>
<evidence type="ECO:0000303" key="6">
    <source>
    </source>
</evidence>
<evidence type="ECO:0000305" key="7"/>
<organism>
    <name type="scientific">Mus musculus</name>
    <name type="common">Mouse</name>
    <dbReference type="NCBI Taxonomy" id="10090"/>
    <lineage>
        <taxon>Eukaryota</taxon>
        <taxon>Metazoa</taxon>
        <taxon>Chordata</taxon>
        <taxon>Craniata</taxon>
        <taxon>Vertebrata</taxon>
        <taxon>Euteleostomi</taxon>
        <taxon>Mammalia</taxon>
        <taxon>Eutheria</taxon>
        <taxon>Euarchontoglires</taxon>
        <taxon>Glires</taxon>
        <taxon>Rodentia</taxon>
        <taxon>Myomorpha</taxon>
        <taxon>Muroidea</taxon>
        <taxon>Muridae</taxon>
        <taxon>Murinae</taxon>
        <taxon>Mus</taxon>
        <taxon>Mus</taxon>
    </lineage>
</organism>